<evidence type="ECO:0000250" key="1"/>
<evidence type="ECO:0000255" key="2">
    <source>
        <dbReference type="HAMAP-Rule" id="MF_01356"/>
    </source>
</evidence>
<organism>
    <name type="scientific">Neisseria meningitidis serogroup A / serotype 4A (strain DSM 15465 / Z2491)</name>
    <dbReference type="NCBI Taxonomy" id="122587"/>
    <lineage>
        <taxon>Bacteria</taxon>
        <taxon>Pseudomonadati</taxon>
        <taxon>Pseudomonadota</taxon>
        <taxon>Betaproteobacteria</taxon>
        <taxon>Neisseriales</taxon>
        <taxon>Neisseriaceae</taxon>
        <taxon>Neisseria</taxon>
    </lineage>
</organism>
<comment type="function">
    <text evidence="1">NDH-1 shuttles electrons from NADH, via FMN and iron-sulfur (Fe-S) centers, to quinones in the respiratory chain. Couples the redox reaction to proton translocation (for every two electrons transferred, four hydrogen ions are translocated across the cytoplasmic membrane), and thus conserves the redox energy in a proton gradient (By similarity).</text>
</comment>
<comment type="catalytic activity">
    <reaction evidence="2">
        <text>a quinone + NADH + 5 H(+)(in) = a quinol + NAD(+) + 4 H(+)(out)</text>
        <dbReference type="Rhea" id="RHEA:57888"/>
        <dbReference type="ChEBI" id="CHEBI:15378"/>
        <dbReference type="ChEBI" id="CHEBI:24646"/>
        <dbReference type="ChEBI" id="CHEBI:57540"/>
        <dbReference type="ChEBI" id="CHEBI:57945"/>
        <dbReference type="ChEBI" id="CHEBI:132124"/>
    </reaction>
</comment>
<comment type="cofactor">
    <cofactor evidence="2">
        <name>[4Fe-4S] cluster</name>
        <dbReference type="ChEBI" id="CHEBI:49883"/>
    </cofactor>
    <text evidence="2">Binds 1 [4Fe-4S] cluster.</text>
</comment>
<comment type="subunit">
    <text evidence="2">NDH-1 is composed of 14 different subunits. Subunits NuoB, C, D, E, F, and G constitute the peripheral sector of the complex.</text>
</comment>
<comment type="subcellular location">
    <subcellularLocation>
        <location evidence="2">Cell inner membrane</location>
        <topology evidence="2">Peripheral membrane protein</topology>
        <orientation evidence="2">Cytoplasmic side</orientation>
    </subcellularLocation>
</comment>
<comment type="similarity">
    <text evidence="2">Belongs to the complex I 20 kDa subunit family.</text>
</comment>
<name>NUOB_NEIMA</name>
<gene>
    <name evidence="2" type="primary">nuoB</name>
    <name type="ordered locus">NMA0018</name>
</gene>
<feature type="chain" id="PRO_0000358429" description="NADH-quinone oxidoreductase subunit B">
    <location>
        <begin position="1"/>
        <end position="160"/>
    </location>
</feature>
<feature type="binding site" evidence="2">
    <location>
        <position position="37"/>
    </location>
    <ligand>
        <name>[4Fe-4S] cluster</name>
        <dbReference type="ChEBI" id="CHEBI:49883"/>
    </ligand>
</feature>
<feature type="binding site" evidence="2">
    <location>
        <position position="38"/>
    </location>
    <ligand>
        <name>[4Fe-4S] cluster</name>
        <dbReference type="ChEBI" id="CHEBI:49883"/>
    </ligand>
</feature>
<feature type="binding site" evidence="2">
    <location>
        <position position="102"/>
    </location>
    <ligand>
        <name>[4Fe-4S] cluster</name>
        <dbReference type="ChEBI" id="CHEBI:49883"/>
    </ligand>
</feature>
<feature type="binding site" evidence="2">
    <location>
        <position position="132"/>
    </location>
    <ligand>
        <name>[4Fe-4S] cluster</name>
        <dbReference type="ChEBI" id="CHEBI:49883"/>
    </ligand>
</feature>
<sequence length="160" mass="17619">MGIEGVLKKGFITTSADTVLNYMRTGSLWPVTFGLACCAVEMMHAGMARYDLDRFGIIFRPSPRQADLMIVAGTLTNKMASALRRVYDQLAEPRWVLSMGSCANGGGYYHYSYSVVRGADRVVPVDVYVPGCPPTAEALIYGLIQLQQKIKRTSTIARDE</sequence>
<dbReference type="EC" id="7.1.1.-" evidence="2"/>
<dbReference type="EMBL" id="AL157959">
    <property type="protein sequence ID" value="CAM07346.1"/>
    <property type="molecule type" value="Genomic_DNA"/>
</dbReference>
<dbReference type="PIR" id="F81992">
    <property type="entry name" value="F81992"/>
</dbReference>
<dbReference type="RefSeq" id="WP_002246751.1">
    <property type="nucleotide sequence ID" value="NC_003116.1"/>
</dbReference>
<dbReference type="SMR" id="A1INN9"/>
<dbReference type="EnsemblBacteria" id="CAM07346">
    <property type="protein sequence ID" value="CAM07346"/>
    <property type="gene ID" value="NMA0018"/>
</dbReference>
<dbReference type="KEGG" id="nma:NMA0018"/>
<dbReference type="HOGENOM" id="CLU_055737_7_3_4"/>
<dbReference type="Proteomes" id="UP000000626">
    <property type="component" value="Chromosome"/>
</dbReference>
<dbReference type="GO" id="GO:0005886">
    <property type="term" value="C:plasma membrane"/>
    <property type="evidence" value="ECO:0007669"/>
    <property type="project" value="UniProtKB-SubCell"/>
</dbReference>
<dbReference type="GO" id="GO:0045271">
    <property type="term" value="C:respiratory chain complex I"/>
    <property type="evidence" value="ECO:0007669"/>
    <property type="project" value="TreeGrafter"/>
</dbReference>
<dbReference type="GO" id="GO:0051539">
    <property type="term" value="F:4 iron, 4 sulfur cluster binding"/>
    <property type="evidence" value="ECO:0007669"/>
    <property type="project" value="UniProtKB-KW"/>
</dbReference>
<dbReference type="GO" id="GO:0005506">
    <property type="term" value="F:iron ion binding"/>
    <property type="evidence" value="ECO:0007669"/>
    <property type="project" value="UniProtKB-UniRule"/>
</dbReference>
<dbReference type="GO" id="GO:0008137">
    <property type="term" value="F:NADH dehydrogenase (ubiquinone) activity"/>
    <property type="evidence" value="ECO:0007669"/>
    <property type="project" value="InterPro"/>
</dbReference>
<dbReference type="GO" id="GO:0050136">
    <property type="term" value="F:NADH:ubiquinone reductase (non-electrogenic) activity"/>
    <property type="evidence" value="ECO:0007669"/>
    <property type="project" value="UniProtKB-UniRule"/>
</dbReference>
<dbReference type="GO" id="GO:0048038">
    <property type="term" value="F:quinone binding"/>
    <property type="evidence" value="ECO:0007669"/>
    <property type="project" value="UniProtKB-KW"/>
</dbReference>
<dbReference type="GO" id="GO:0009060">
    <property type="term" value="P:aerobic respiration"/>
    <property type="evidence" value="ECO:0007669"/>
    <property type="project" value="TreeGrafter"/>
</dbReference>
<dbReference type="GO" id="GO:0015990">
    <property type="term" value="P:electron transport coupled proton transport"/>
    <property type="evidence" value="ECO:0007669"/>
    <property type="project" value="TreeGrafter"/>
</dbReference>
<dbReference type="FunFam" id="3.40.50.12280:FF:000001">
    <property type="entry name" value="NADH-quinone oxidoreductase subunit B 2"/>
    <property type="match status" value="1"/>
</dbReference>
<dbReference type="Gene3D" id="3.40.50.12280">
    <property type="match status" value="1"/>
</dbReference>
<dbReference type="HAMAP" id="MF_01356">
    <property type="entry name" value="NDH1_NuoB"/>
    <property type="match status" value="1"/>
</dbReference>
<dbReference type="InterPro" id="IPR006137">
    <property type="entry name" value="NADH_UbQ_OxRdtase-like_20kDa"/>
</dbReference>
<dbReference type="InterPro" id="IPR006138">
    <property type="entry name" value="NADH_UQ_OxRdtase_20Kd_su"/>
</dbReference>
<dbReference type="NCBIfam" id="TIGR01957">
    <property type="entry name" value="nuoB_fam"/>
    <property type="match status" value="1"/>
</dbReference>
<dbReference type="NCBIfam" id="NF005012">
    <property type="entry name" value="PRK06411.1"/>
    <property type="match status" value="1"/>
</dbReference>
<dbReference type="PANTHER" id="PTHR11995">
    <property type="entry name" value="NADH DEHYDROGENASE"/>
    <property type="match status" value="1"/>
</dbReference>
<dbReference type="PANTHER" id="PTHR11995:SF14">
    <property type="entry name" value="NADH DEHYDROGENASE [UBIQUINONE] IRON-SULFUR PROTEIN 7, MITOCHONDRIAL"/>
    <property type="match status" value="1"/>
</dbReference>
<dbReference type="Pfam" id="PF01058">
    <property type="entry name" value="Oxidored_q6"/>
    <property type="match status" value="1"/>
</dbReference>
<dbReference type="SUPFAM" id="SSF56770">
    <property type="entry name" value="HydA/Nqo6-like"/>
    <property type="match status" value="1"/>
</dbReference>
<dbReference type="PROSITE" id="PS01150">
    <property type="entry name" value="COMPLEX1_20K"/>
    <property type="match status" value="1"/>
</dbReference>
<accession>A1INN9</accession>
<keyword id="KW-0004">4Fe-4S</keyword>
<keyword id="KW-0997">Cell inner membrane</keyword>
<keyword id="KW-1003">Cell membrane</keyword>
<keyword id="KW-0408">Iron</keyword>
<keyword id="KW-0411">Iron-sulfur</keyword>
<keyword id="KW-0472">Membrane</keyword>
<keyword id="KW-0479">Metal-binding</keyword>
<keyword id="KW-0520">NAD</keyword>
<keyword id="KW-0874">Quinone</keyword>
<keyword id="KW-1278">Translocase</keyword>
<keyword id="KW-0813">Transport</keyword>
<keyword id="KW-0830">Ubiquinone</keyword>
<protein>
    <recommendedName>
        <fullName evidence="2">NADH-quinone oxidoreductase subunit B</fullName>
        <ecNumber evidence="2">7.1.1.-</ecNumber>
    </recommendedName>
    <alternativeName>
        <fullName evidence="2">NADH dehydrogenase I subunit B</fullName>
    </alternativeName>
    <alternativeName>
        <fullName evidence="2">NDH-1 subunit B</fullName>
    </alternativeName>
</protein>
<reference key="1">
    <citation type="journal article" date="2000" name="Nature">
        <title>Complete DNA sequence of a serogroup A strain of Neisseria meningitidis Z2491.</title>
        <authorList>
            <person name="Parkhill J."/>
            <person name="Achtman M."/>
            <person name="James K.D."/>
            <person name="Bentley S.D."/>
            <person name="Churcher C.M."/>
            <person name="Klee S.R."/>
            <person name="Morelli G."/>
            <person name="Basham D."/>
            <person name="Brown D."/>
            <person name="Chillingworth T."/>
            <person name="Davies R.M."/>
            <person name="Davis P."/>
            <person name="Devlin K."/>
            <person name="Feltwell T."/>
            <person name="Hamlin N."/>
            <person name="Holroyd S."/>
            <person name="Jagels K."/>
            <person name="Leather S."/>
            <person name="Moule S."/>
            <person name="Mungall K.L."/>
            <person name="Quail M.A."/>
            <person name="Rajandream M.A."/>
            <person name="Rutherford K.M."/>
            <person name="Simmonds M."/>
            <person name="Skelton J."/>
            <person name="Whitehead S."/>
            <person name="Spratt B.G."/>
            <person name="Barrell B.G."/>
        </authorList>
    </citation>
    <scope>NUCLEOTIDE SEQUENCE [LARGE SCALE GENOMIC DNA]</scope>
    <source>
        <strain>DSM 15465 / Z2491</strain>
    </source>
</reference>
<proteinExistence type="inferred from homology"/>